<sequence length="275" mass="30413">MTTLQEKIIQELGVLPTIDPKEEVRKSIDFLKAYLTKHPFLKTFVLGISGGQDSTLAGRLAQLAMTEMREETGDMSYQFIAIRLPYGEQADEADAQAALAFIQPDVSLRVDIKPAVDAMVGSLENAGVQISDFNKGNMKARQRMITQYAVAGENAGAVIGTDHAAENVTAFFTKYGDGGADILPLFRLNKRQGKALLKELGAPEALYLKIPTADLEDDKPLVADEVALGVTYDAIDDYLEGKKVSETDQQTIENWYKKGQHKRHLPITIFDDFWK</sequence>
<reference key="1">
    <citation type="journal article" date="2003" name="Science">
        <title>Role of mobile DNA in the evolution of vancomycin-resistant Enterococcus faecalis.</title>
        <authorList>
            <person name="Paulsen I.T."/>
            <person name="Banerjei L."/>
            <person name="Myers G.S.A."/>
            <person name="Nelson K.E."/>
            <person name="Seshadri R."/>
            <person name="Read T.D."/>
            <person name="Fouts D.E."/>
            <person name="Eisen J.A."/>
            <person name="Gill S.R."/>
            <person name="Heidelberg J.F."/>
            <person name="Tettelin H."/>
            <person name="Dodson R.J."/>
            <person name="Umayam L.A."/>
            <person name="Brinkac L.M."/>
            <person name="Beanan M.J."/>
            <person name="Daugherty S.C."/>
            <person name="DeBoy R.T."/>
            <person name="Durkin S.A."/>
            <person name="Kolonay J.F."/>
            <person name="Madupu R."/>
            <person name="Nelson W.C."/>
            <person name="Vamathevan J.J."/>
            <person name="Tran B."/>
            <person name="Upton J."/>
            <person name="Hansen T."/>
            <person name="Shetty J."/>
            <person name="Khouri H.M."/>
            <person name="Utterback T.R."/>
            <person name="Radune D."/>
            <person name="Ketchum K.A."/>
            <person name="Dougherty B.A."/>
            <person name="Fraser C.M."/>
        </authorList>
    </citation>
    <scope>NUCLEOTIDE SEQUENCE [LARGE SCALE GENOMIC DNA]</scope>
    <source>
        <strain>ATCC 700802 / V583</strain>
    </source>
</reference>
<feature type="chain" id="PRO_0000152170" description="NH(3)-dependent NAD(+) synthetase">
    <location>
        <begin position="1"/>
        <end position="275"/>
    </location>
</feature>
<feature type="binding site" evidence="1">
    <location>
        <begin position="47"/>
        <end position="54"/>
    </location>
    <ligand>
        <name>ATP</name>
        <dbReference type="ChEBI" id="CHEBI:30616"/>
    </ligand>
</feature>
<feature type="binding site" evidence="1">
    <location>
        <position position="53"/>
    </location>
    <ligand>
        <name>Mg(2+)</name>
        <dbReference type="ChEBI" id="CHEBI:18420"/>
    </ligand>
</feature>
<feature type="binding site" evidence="1">
    <location>
        <position position="141"/>
    </location>
    <ligand>
        <name>deamido-NAD(+)</name>
        <dbReference type="ChEBI" id="CHEBI:58437"/>
    </ligand>
</feature>
<feature type="binding site" evidence="1">
    <location>
        <position position="161"/>
    </location>
    <ligand>
        <name>ATP</name>
        <dbReference type="ChEBI" id="CHEBI:30616"/>
    </ligand>
</feature>
<feature type="binding site" evidence="1">
    <location>
        <position position="166"/>
    </location>
    <ligand>
        <name>Mg(2+)</name>
        <dbReference type="ChEBI" id="CHEBI:18420"/>
    </ligand>
</feature>
<feature type="binding site" evidence="1">
    <location>
        <position position="174"/>
    </location>
    <ligand>
        <name>deamido-NAD(+)</name>
        <dbReference type="ChEBI" id="CHEBI:58437"/>
    </ligand>
</feature>
<feature type="binding site" evidence="1">
    <location>
        <position position="181"/>
    </location>
    <ligand>
        <name>deamido-NAD(+)</name>
        <dbReference type="ChEBI" id="CHEBI:58437"/>
    </ligand>
</feature>
<feature type="binding site" evidence="1">
    <location>
        <position position="190"/>
    </location>
    <ligand>
        <name>ATP</name>
        <dbReference type="ChEBI" id="CHEBI:30616"/>
    </ligand>
</feature>
<feature type="binding site" evidence="1">
    <location>
        <position position="212"/>
    </location>
    <ligand>
        <name>ATP</name>
        <dbReference type="ChEBI" id="CHEBI:30616"/>
    </ligand>
</feature>
<feature type="binding site" evidence="1">
    <location>
        <begin position="261"/>
        <end position="262"/>
    </location>
    <ligand>
        <name>deamido-NAD(+)</name>
        <dbReference type="ChEBI" id="CHEBI:58437"/>
    </ligand>
</feature>
<feature type="helix" evidence="2">
    <location>
        <begin position="4"/>
        <end position="12"/>
    </location>
</feature>
<feature type="helix" evidence="2">
    <location>
        <begin position="20"/>
        <end position="37"/>
    </location>
</feature>
<feature type="strand" evidence="2">
    <location>
        <begin position="43"/>
        <end position="47"/>
    </location>
</feature>
<feature type="helix" evidence="2">
    <location>
        <begin position="52"/>
        <end position="72"/>
    </location>
</feature>
<feature type="strand" evidence="2">
    <location>
        <begin position="78"/>
        <end position="83"/>
    </location>
</feature>
<feature type="strand" evidence="2">
    <location>
        <begin position="86"/>
        <end position="89"/>
    </location>
</feature>
<feature type="helix" evidence="2">
    <location>
        <begin position="93"/>
        <end position="102"/>
    </location>
</feature>
<feature type="strand" evidence="2">
    <location>
        <begin position="105"/>
        <end position="109"/>
    </location>
</feature>
<feature type="helix" evidence="2">
    <location>
        <begin position="113"/>
        <end position="124"/>
    </location>
</feature>
<feature type="turn" evidence="2">
    <location>
        <begin position="125"/>
        <end position="127"/>
    </location>
</feature>
<feature type="helix" evidence="2">
    <location>
        <begin position="132"/>
        <end position="151"/>
    </location>
</feature>
<feature type="turn" evidence="2">
    <location>
        <begin position="152"/>
        <end position="155"/>
    </location>
</feature>
<feature type="strand" evidence="2">
    <location>
        <begin position="156"/>
        <end position="159"/>
    </location>
</feature>
<feature type="helix" evidence="2">
    <location>
        <begin position="164"/>
        <end position="168"/>
    </location>
</feature>
<feature type="turn" evidence="2">
    <location>
        <begin position="174"/>
        <end position="178"/>
    </location>
</feature>
<feature type="turn" evidence="2">
    <location>
        <begin position="184"/>
        <end position="187"/>
    </location>
</feature>
<feature type="helix" evidence="2">
    <location>
        <begin position="190"/>
        <end position="199"/>
    </location>
</feature>
<feature type="helix" evidence="2">
    <location>
        <begin position="204"/>
        <end position="206"/>
    </location>
</feature>
<feature type="helix" evidence="2">
    <location>
        <begin position="223"/>
        <end position="228"/>
    </location>
</feature>
<feature type="helix" evidence="2">
    <location>
        <begin position="232"/>
        <end position="239"/>
    </location>
</feature>
<feature type="helix" evidence="2">
    <location>
        <begin position="246"/>
        <end position="258"/>
    </location>
</feature>
<feature type="helix" evidence="2">
    <location>
        <begin position="260"/>
        <end position="262"/>
    </location>
</feature>
<feature type="strand" evidence="2">
    <location>
        <begin position="263"/>
        <end position="267"/>
    </location>
</feature>
<protein>
    <recommendedName>
        <fullName evidence="1">NH(3)-dependent NAD(+) synthetase</fullName>
        <ecNumber evidence="1">6.3.1.5</ecNumber>
    </recommendedName>
</protein>
<keyword id="KW-0002">3D-structure</keyword>
<keyword id="KW-0067">ATP-binding</keyword>
<keyword id="KW-0436">Ligase</keyword>
<keyword id="KW-0460">Magnesium</keyword>
<keyword id="KW-0479">Metal-binding</keyword>
<keyword id="KW-0520">NAD</keyword>
<keyword id="KW-0547">Nucleotide-binding</keyword>
<keyword id="KW-1185">Reference proteome</keyword>
<gene>
    <name evidence="1" type="primary">nadE</name>
    <name type="ordered locus">EF_2625</name>
</gene>
<evidence type="ECO:0000255" key="1">
    <source>
        <dbReference type="HAMAP-Rule" id="MF_00193"/>
    </source>
</evidence>
<evidence type="ECO:0007829" key="2">
    <source>
        <dbReference type="PDB" id="6C8Q"/>
    </source>
</evidence>
<accession>Q830Y9</accession>
<name>NADE_ENTFA</name>
<dbReference type="EC" id="6.3.1.5" evidence="1"/>
<dbReference type="EMBL" id="AE016830">
    <property type="protein sequence ID" value="AAO82334.1"/>
    <property type="molecule type" value="Genomic_DNA"/>
</dbReference>
<dbReference type="RefSeq" id="NP_816264.1">
    <property type="nucleotide sequence ID" value="NC_004668.1"/>
</dbReference>
<dbReference type="RefSeq" id="WP_002356540.1">
    <property type="nucleotide sequence ID" value="NZ_KE136528.1"/>
</dbReference>
<dbReference type="PDB" id="6C8Q">
    <property type="method" value="X-ray"/>
    <property type="resolution" value="2.58 A"/>
    <property type="chains" value="A/B/C/D/E/F/G/H=1-275"/>
</dbReference>
<dbReference type="PDBsum" id="6C8Q"/>
<dbReference type="SMR" id="Q830Y9"/>
<dbReference type="STRING" id="226185.EF_2625"/>
<dbReference type="EnsemblBacteria" id="AAO82334">
    <property type="protein sequence ID" value="AAO82334"/>
    <property type="gene ID" value="EF_2625"/>
</dbReference>
<dbReference type="GeneID" id="60894624"/>
<dbReference type="KEGG" id="efa:EF2625"/>
<dbReference type="PATRIC" id="fig|226185.45.peg.934"/>
<dbReference type="eggNOG" id="COG0171">
    <property type="taxonomic scope" value="Bacteria"/>
</dbReference>
<dbReference type="HOGENOM" id="CLU_059327_3_0_9"/>
<dbReference type="UniPathway" id="UPA00253">
    <property type="reaction ID" value="UER00333"/>
</dbReference>
<dbReference type="Proteomes" id="UP000001415">
    <property type="component" value="Chromosome"/>
</dbReference>
<dbReference type="GO" id="GO:0005737">
    <property type="term" value="C:cytoplasm"/>
    <property type="evidence" value="ECO:0007669"/>
    <property type="project" value="InterPro"/>
</dbReference>
<dbReference type="GO" id="GO:0005524">
    <property type="term" value="F:ATP binding"/>
    <property type="evidence" value="ECO:0007669"/>
    <property type="project" value="UniProtKB-UniRule"/>
</dbReference>
<dbReference type="GO" id="GO:0004359">
    <property type="term" value="F:glutaminase activity"/>
    <property type="evidence" value="ECO:0007669"/>
    <property type="project" value="InterPro"/>
</dbReference>
<dbReference type="GO" id="GO:0046872">
    <property type="term" value="F:metal ion binding"/>
    <property type="evidence" value="ECO:0007669"/>
    <property type="project" value="UniProtKB-KW"/>
</dbReference>
<dbReference type="GO" id="GO:0003952">
    <property type="term" value="F:NAD+ synthase (glutamine-hydrolyzing) activity"/>
    <property type="evidence" value="ECO:0007669"/>
    <property type="project" value="InterPro"/>
</dbReference>
<dbReference type="GO" id="GO:0008795">
    <property type="term" value="F:NAD+ synthase activity"/>
    <property type="evidence" value="ECO:0007669"/>
    <property type="project" value="UniProtKB-UniRule"/>
</dbReference>
<dbReference type="GO" id="GO:0009435">
    <property type="term" value="P:NAD biosynthetic process"/>
    <property type="evidence" value="ECO:0007669"/>
    <property type="project" value="UniProtKB-UniRule"/>
</dbReference>
<dbReference type="CDD" id="cd00553">
    <property type="entry name" value="NAD_synthase"/>
    <property type="match status" value="1"/>
</dbReference>
<dbReference type="FunFam" id="3.40.50.620:FF:000015">
    <property type="entry name" value="NH(3)-dependent NAD(+) synthetase"/>
    <property type="match status" value="1"/>
</dbReference>
<dbReference type="Gene3D" id="3.40.50.620">
    <property type="entry name" value="HUPs"/>
    <property type="match status" value="1"/>
</dbReference>
<dbReference type="HAMAP" id="MF_00193">
    <property type="entry name" value="NadE_ammonia_dep"/>
    <property type="match status" value="1"/>
</dbReference>
<dbReference type="InterPro" id="IPR022310">
    <property type="entry name" value="NAD/GMP_synthase"/>
</dbReference>
<dbReference type="InterPro" id="IPR003694">
    <property type="entry name" value="NAD_synthase"/>
</dbReference>
<dbReference type="InterPro" id="IPR022926">
    <property type="entry name" value="NH(3)-dep_NAD(+)_synth"/>
</dbReference>
<dbReference type="InterPro" id="IPR014729">
    <property type="entry name" value="Rossmann-like_a/b/a_fold"/>
</dbReference>
<dbReference type="NCBIfam" id="TIGR00552">
    <property type="entry name" value="nadE"/>
    <property type="match status" value="1"/>
</dbReference>
<dbReference type="NCBIfam" id="NF001979">
    <property type="entry name" value="PRK00768.1"/>
    <property type="match status" value="1"/>
</dbReference>
<dbReference type="PANTHER" id="PTHR23090">
    <property type="entry name" value="NH 3 /GLUTAMINE-DEPENDENT NAD + SYNTHETASE"/>
    <property type="match status" value="1"/>
</dbReference>
<dbReference type="PANTHER" id="PTHR23090:SF7">
    <property type="entry name" value="NH(3)-DEPENDENT NAD(+) SYNTHETASE"/>
    <property type="match status" value="1"/>
</dbReference>
<dbReference type="Pfam" id="PF02540">
    <property type="entry name" value="NAD_synthase"/>
    <property type="match status" value="1"/>
</dbReference>
<dbReference type="SUPFAM" id="SSF52402">
    <property type="entry name" value="Adenine nucleotide alpha hydrolases-like"/>
    <property type="match status" value="1"/>
</dbReference>
<organism>
    <name type="scientific">Enterococcus faecalis (strain ATCC 700802 / V583)</name>
    <dbReference type="NCBI Taxonomy" id="226185"/>
    <lineage>
        <taxon>Bacteria</taxon>
        <taxon>Bacillati</taxon>
        <taxon>Bacillota</taxon>
        <taxon>Bacilli</taxon>
        <taxon>Lactobacillales</taxon>
        <taxon>Enterococcaceae</taxon>
        <taxon>Enterococcus</taxon>
    </lineage>
</organism>
<comment type="function">
    <text evidence="1">Catalyzes the ATP-dependent amidation of deamido-NAD to form NAD. Uses ammonia as a nitrogen source.</text>
</comment>
<comment type="catalytic activity">
    <reaction evidence="1">
        <text>deamido-NAD(+) + NH4(+) + ATP = AMP + diphosphate + NAD(+) + H(+)</text>
        <dbReference type="Rhea" id="RHEA:21188"/>
        <dbReference type="ChEBI" id="CHEBI:15378"/>
        <dbReference type="ChEBI" id="CHEBI:28938"/>
        <dbReference type="ChEBI" id="CHEBI:30616"/>
        <dbReference type="ChEBI" id="CHEBI:33019"/>
        <dbReference type="ChEBI" id="CHEBI:57540"/>
        <dbReference type="ChEBI" id="CHEBI:58437"/>
        <dbReference type="ChEBI" id="CHEBI:456215"/>
        <dbReference type="EC" id="6.3.1.5"/>
    </reaction>
</comment>
<comment type="pathway">
    <text evidence="1">Cofactor biosynthesis; NAD(+) biosynthesis; NAD(+) from deamido-NAD(+) (ammonia route): step 1/1.</text>
</comment>
<comment type="subunit">
    <text evidence="1">Homodimer.</text>
</comment>
<comment type="similarity">
    <text evidence="1">Belongs to the NAD synthetase family.</text>
</comment>
<proteinExistence type="evidence at protein level"/>